<feature type="chain" id="PRO_1000212718" description="Endonuclease NucS">
    <location>
        <begin position="1"/>
        <end position="237"/>
    </location>
</feature>
<protein>
    <recommendedName>
        <fullName evidence="1">Endonuclease NucS</fullName>
        <ecNumber evidence="1">3.1.-.-</ecNumber>
    </recommendedName>
</protein>
<name>NUCS_SACI2</name>
<proteinExistence type="inferred from homology"/>
<sequence length="237" mass="27401">MYSVLLNPSNTEIYSFLTERIYRELVVIFATCKVNYKGRAESVASESPRLIILKPDGTVIIHESVKREPLNWQPPGTKIEIMNDYPLKIVAQRKRPKEVIEIDLKEVFYITSAEVKDGDFVIKGREIDIVNTIIQNPSMIEEGFVPLTREYNTPYGKIDLVGLDKKGNFVIIEVKRSKAQLSAVSQLYRYYLHIRETKEDKVRGILVAPDLTTHARELLQKLGLEFIRYDIQKYSSY</sequence>
<comment type="function">
    <text evidence="1">Cleaves both 3' and 5' ssDNA extremities of branched DNA structures.</text>
</comment>
<comment type="subcellular location">
    <subcellularLocation>
        <location evidence="1">Cytoplasm</location>
    </subcellularLocation>
</comment>
<comment type="similarity">
    <text evidence="1">Belongs to the NucS endonuclease family.</text>
</comment>
<accession>C3MJA1</accession>
<organism>
    <name type="scientific">Saccharolobus islandicus (strain L.S.2.15 / Lassen #1)</name>
    <name type="common">Sulfolobus islandicus</name>
    <dbReference type="NCBI Taxonomy" id="429572"/>
    <lineage>
        <taxon>Archaea</taxon>
        <taxon>Thermoproteota</taxon>
        <taxon>Thermoprotei</taxon>
        <taxon>Sulfolobales</taxon>
        <taxon>Sulfolobaceae</taxon>
        <taxon>Saccharolobus</taxon>
    </lineage>
</organism>
<evidence type="ECO:0000255" key="1">
    <source>
        <dbReference type="HAMAP-Rule" id="MF_00722"/>
    </source>
</evidence>
<keyword id="KW-0963">Cytoplasm</keyword>
<keyword id="KW-0238">DNA-binding</keyword>
<keyword id="KW-0255">Endonuclease</keyword>
<keyword id="KW-0378">Hydrolase</keyword>
<keyword id="KW-0540">Nuclease</keyword>
<reference key="1">
    <citation type="journal article" date="2009" name="Proc. Natl. Acad. Sci. U.S.A.">
        <title>Biogeography of the Sulfolobus islandicus pan-genome.</title>
        <authorList>
            <person name="Reno M.L."/>
            <person name="Held N.L."/>
            <person name="Fields C.J."/>
            <person name="Burke P.V."/>
            <person name="Whitaker R.J."/>
        </authorList>
    </citation>
    <scope>NUCLEOTIDE SEQUENCE [LARGE SCALE GENOMIC DNA]</scope>
    <source>
        <strain>L.S.2.15 / Lassen #1</strain>
    </source>
</reference>
<gene>
    <name evidence="1" type="primary">nucS</name>
    <name type="ordered locus">LS215_0025</name>
</gene>
<dbReference type="EC" id="3.1.-.-" evidence="1"/>
<dbReference type="EMBL" id="CP001399">
    <property type="protein sequence ID" value="ACP34179.1"/>
    <property type="molecule type" value="Genomic_DNA"/>
</dbReference>
<dbReference type="RefSeq" id="WP_012710204.1">
    <property type="nucleotide sequence ID" value="NC_012589.1"/>
</dbReference>
<dbReference type="SMR" id="C3MJA1"/>
<dbReference type="GeneID" id="84060527"/>
<dbReference type="KEGG" id="sis:LS215_0025"/>
<dbReference type="HOGENOM" id="CLU_069350_1_0_2"/>
<dbReference type="OrthoDB" id="15177at2157"/>
<dbReference type="Proteomes" id="UP000001747">
    <property type="component" value="Chromosome"/>
</dbReference>
<dbReference type="GO" id="GO:0005737">
    <property type="term" value="C:cytoplasm"/>
    <property type="evidence" value="ECO:0007669"/>
    <property type="project" value="UniProtKB-SubCell"/>
</dbReference>
<dbReference type="GO" id="GO:0003677">
    <property type="term" value="F:DNA binding"/>
    <property type="evidence" value="ECO:0007669"/>
    <property type="project" value="UniProtKB-KW"/>
</dbReference>
<dbReference type="GO" id="GO:0000014">
    <property type="term" value="F:single-stranded DNA endodeoxyribonuclease activity"/>
    <property type="evidence" value="ECO:0007669"/>
    <property type="project" value="UniProtKB-UniRule"/>
</dbReference>
<dbReference type="CDD" id="cd22341">
    <property type="entry name" value="NucS-like"/>
    <property type="match status" value="1"/>
</dbReference>
<dbReference type="Gene3D" id="2.70.180.20">
    <property type="match status" value="1"/>
</dbReference>
<dbReference type="Gene3D" id="3.40.1350.10">
    <property type="match status" value="1"/>
</dbReference>
<dbReference type="HAMAP" id="MF_00722">
    <property type="entry name" value="NucS"/>
    <property type="match status" value="1"/>
</dbReference>
<dbReference type="InterPro" id="IPR002793">
    <property type="entry name" value="Endonuclease_NucS"/>
</dbReference>
<dbReference type="InterPro" id="IPR048301">
    <property type="entry name" value="NucS_C"/>
</dbReference>
<dbReference type="InterPro" id="IPR048302">
    <property type="entry name" value="NucS_N"/>
</dbReference>
<dbReference type="InterPro" id="IPR049173">
    <property type="entry name" value="NucS_N_sf"/>
</dbReference>
<dbReference type="InterPro" id="IPR011335">
    <property type="entry name" value="Restrct_endonuc-II-like"/>
</dbReference>
<dbReference type="InterPro" id="IPR011856">
    <property type="entry name" value="tRNA_endonuc-like_dom_sf"/>
</dbReference>
<dbReference type="NCBIfam" id="NF003270">
    <property type="entry name" value="PRK04247.1"/>
    <property type="match status" value="1"/>
</dbReference>
<dbReference type="PANTHER" id="PTHR38814">
    <property type="entry name" value="ENDONUCLEASE NUCS"/>
    <property type="match status" value="1"/>
</dbReference>
<dbReference type="PANTHER" id="PTHR38814:SF1">
    <property type="entry name" value="ENDONUCLEASE NUCS"/>
    <property type="match status" value="1"/>
</dbReference>
<dbReference type="Pfam" id="PF01939">
    <property type="entry name" value="NucS_C"/>
    <property type="match status" value="1"/>
</dbReference>
<dbReference type="Pfam" id="PF21003">
    <property type="entry name" value="NucS_N"/>
    <property type="match status" value="1"/>
</dbReference>
<dbReference type="SUPFAM" id="SSF52980">
    <property type="entry name" value="Restriction endonuclease-like"/>
    <property type="match status" value="1"/>
</dbReference>